<proteinExistence type="inferred from homology"/>
<keyword id="KW-0186">Copper</keyword>
<keyword id="KW-0479">Metal-binding</keyword>
<keyword id="KW-0560">Oxidoreductase</keyword>
<keyword id="KW-0574">Periplasm</keyword>
<keyword id="KW-1185">Reference proteome</keyword>
<keyword id="KW-0677">Repeat</keyword>
<keyword id="KW-0732">Signal</keyword>
<reference key="1">
    <citation type="journal article" date="2003" name="Proc. Natl. Acad. Sci. U.S.A.">
        <title>The complete genome sequence of the Arabidopsis and tomato pathogen Pseudomonas syringae pv. tomato DC3000.</title>
        <authorList>
            <person name="Buell C.R."/>
            <person name="Joardar V."/>
            <person name="Lindeberg M."/>
            <person name="Selengut J."/>
            <person name="Paulsen I.T."/>
            <person name="Gwinn M.L."/>
            <person name="Dodson R.J."/>
            <person name="DeBoy R.T."/>
            <person name="Durkin A.S."/>
            <person name="Kolonay J.F."/>
            <person name="Madupu R."/>
            <person name="Daugherty S.C."/>
            <person name="Brinkac L.M."/>
            <person name="Beanan M.J."/>
            <person name="Haft D.H."/>
            <person name="Nelson W.C."/>
            <person name="Davidsen T.M."/>
            <person name="Zafar N."/>
            <person name="Zhou L."/>
            <person name="Liu J."/>
            <person name="Yuan Q."/>
            <person name="Khouri H.M."/>
            <person name="Fedorova N.B."/>
            <person name="Tran B."/>
            <person name="Russell D."/>
            <person name="Berry K.J."/>
            <person name="Utterback T.R."/>
            <person name="Van Aken S.E."/>
            <person name="Feldblyum T.V."/>
            <person name="D'Ascenzo M."/>
            <person name="Deng W.-L."/>
            <person name="Ramos A.R."/>
            <person name="Alfano J.R."/>
            <person name="Cartinhour S."/>
            <person name="Chatterjee A.K."/>
            <person name="Delaney T.P."/>
            <person name="Lazarowitz S.G."/>
            <person name="Martin G.B."/>
            <person name="Schneider D.J."/>
            <person name="Tang X."/>
            <person name="Bender C.L."/>
            <person name="White O."/>
            <person name="Fraser C.M."/>
            <person name="Collmer A."/>
        </authorList>
    </citation>
    <scope>NUCLEOTIDE SEQUENCE [LARGE SCALE GENOMIC DNA]</scope>
    <source>
        <strain>ATCC BAA-871 / DC3000</strain>
    </source>
</reference>
<protein>
    <recommendedName>
        <fullName>Copper resistance protein A homolog</fullName>
    </recommendedName>
</protein>
<sequence>MPTRTSRRTFVKGLAASSILSGLGLWRSPAWALPNPGQPDGLSGTEFDLTIGETQVNITGNARTAMTINGGIPGPLLRWREGDTVTLRVKNRLDETTSIHWHGIILPANMDGVPGLSFDGIAPDGMYVYRFKVRQHGTYWYHSHSGFQEQSGVYGPLVIDAKEPEPFTYEREHVVMLTDWADEDPARVMKKLKKQSDYYNNNKRTVGDFINDVGEKGWSATTAERWMWAQMKMNPTDLADVSGATYTYLMNGQAPNMNWTGLFKPGEQIRLRFINGSSMTYFDVRIPGLKMTVVASDGLHIKPVVVDELRIAVAETFDVIVEPADGAYTLFAQSMDRTGFARGTLTSRPGMQAEVPPLDPRPLLSMDDMGMAGMDHGSMNHSAKPAMDGMDHSKMDHDSMPGMDHGTMPMQEAPVMQSHPDSERNNPLVDMQAMSTSAKLNDPGIGLRDNGRKVLTYADLRSTFEDPDGREPSRTIELHLTGHMEKFAWSFDGVKFSDAKPLMLKYGERVRIVLVNDTMMTHPIHLHGMWSDLEDENGQFMVRKHTIDMPPGSRRSYRVTADALGRWAYHCHMLYHMEMGMFREVRVEE</sequence>
<dbReference type="EMBL" id="AE016853">
    <property type="protein sequence ID" value="AAO57380.1"/>
    <property type="molecule type" value="Genomic_DNA"/>
</dbReference>
<dbReference type="RefSeq" id="NP_793685.1">
    <property type="nucleotide sequence ID" value="NC_004578.1"/>
</dbReference>
<dbReference type="RefSeq" id="WP_011104780.1">
    <property type="nucleotide sequence ID" value="NC_004578.1"/>
</dbReference>
<dbReference type="SMR" id="P59571"/>
<dbReference type="STRING" id="223283.PSPTO_3914"/>
<dbReference type="GeneID" id="1185587"/>
<dbReference type="KEGG" id="pst:PSPTO_3914"/>
<dbReference type="PATRIC" id="fig|223283.9.peg.4013"/>
<dbReference type="eggNOG" id="COG2132">
    <property type="taxonomic scope" value="Bacteria"/>
</dbReference>
<dbReference type="HOGENOM" id="CLU_009100_5_2_6"/>
<dbReference type="OrthoDB" id="9757546at2"/>
<dbReference type="PhylomeDB" id="P59571"/>
<dbReference type="Proteomes" id="UP000002515">
    <property type="component" value="Chromosome"/>
</dbReference>
<dbReference type="GO" id="GO:0042597">
    <property type="term" value="C:periplasmic space"/>
    <property type="evidence" value="ECO:0007669"/>
    <property type="project" value="UniProtKB-SubCell"/>
</dbReference>
<dbReference type="GO" id="GO:0005507">
    <property type="term" value="F:copper ion binding"/>
    <property type="evidence" value="ECO:0007669"/>
    <property type="project" value="InterPro"/>
</dbReference>
<dbReference type="GO" id="GO:0016491">
    <property type="term" value="F:oxidoreductase activity"/>
    <property type="evidence" value="ECO:0007669"/>
    <property type="project" value="UniProtKB-KW"/>
</dbReference>
<dbReference type="CDD" id="cd13848">
    <property type="entry name" value="CuRO_1_CopA"/>
    <property type="match status" value="1"/>
</dbReference>
<dbReference type="CDD" id="cd13874">
    <property type="entry name" value="CuRO_2_CopA"/>
    <property type="match status" value="1"/>
</dbReference>
<dbReference type="CDD" id="cd13896">
    <property type="entry name" value="CuRO_3_CopA"/>
    <property type="match status" value="1"/>
</dbReference>
<dbReference type="Gene3D" id="2.60.40.420">
    <property type="entry name" value="Cupredoxins - blue copper proteins"/>
    <property type="match status" value="3"/>
</dbReference>
<dbReference type="InterPro" id="IPR011707">
    <property type="entry name" value="Cu-oxidase-like_N"/>
</dbReference>
<dbReference type="InterPro" id="IPR001117">
    <property type="entry name" value="Cu-oxidase_2nd"/>
</dbReference>
<dbReference type="InterPro" id="IPR011706">
    <property type="entry name" value="Cu-oxidase_C"/>
</dbReference>
<dbReference type="InterPro" id="IPR045087">
    <property type="entry name" value="Cu-oxidase_fam"/>
</dbReference>
<dbReference type="InterPro" id="IPR006376">
    <property type="entry name" value="Cu-R_CopA"/>
</dbReference>
<dbReference type="InterPro" id="IPR033138">
    <property type="entry name" value="Cu_oxidase_CS"/>
</dbReference>
<dbReference type="InterPro" id="IPR002355">
    <property type="entry name" value="Cu_oxidase_Cu_BS"/>
</dbReference>
<dbReference type="InterPro" id="IPR008972">
    <property type="entry name" value="Cupredoxin"/>
</dbReference>
<dbReference type="InterPro" id="IPR034284">
    <property type="entry name" value="CuRO_1_CopA"/>
</dbReference>
<dbReference type="InterPro" id="IPR034282">
    <property type="entry name" value="CuRO_2_CopA"/>
</dbReference>
<dbReference type="InterPro" id="IPR034279">
    <property type="entry name" value="CuRO_3_CopA"/>
</dbReference>
<dbReference type="InterPro" id="IPR006311">
    <property type="entry name" value="TAT_signal"/>
</dbReference>
<dbReference type="InterPro" id="IPR019546">
    <property type="entry name" value="TAT_signal_bac_arc"/>
</dbReference>
<dbReference type="NCBIfam" id="TIGR01480">
    <property type="entry name" value="copper_res_A"/>
    <property type="match status" value="1"/>
</dbReference>
<dbReference type="NCBIfam" id="TIGR01409">
    <property type="entry name" value="TAT_signal_seq"/>
    <property type="match status" value="1"/>
</dbReference>
<dbReference type="PANTHER" id="PTHR11709:SF394">
    <property type="entry name" value="FI03373P-RELATED"/>
    <property type="match status" value="1"/>
</dbReference>
<dbReference type="PANTHER" id="PTHR11709">
    <property type="entry name" value="MULTI-COPPER OXIDASE"/>
    <property type="match status" value="1"/>
</dbReference>
<dbReference type="Pfam" id="PF00394">
    <property type="entry name" value="Cu-oxidase"/>
    <property type="match status" value="1"/>
</dbReference>
<dbReference type="Pfam" id="PF07731">
    <property type="entry name" value="Cu-oxidase_2"/>
    <property type="match status" value="1"/>
</dbReference>
<dbReference type="Pfam" id="PF07732">
    <property type="entry name" value="Cu-oxidase_3"/>
    <property type="match status" value="1"/>
</dbReference>
<dbReference type="SUPFAM" id="SSF49503">
    <property type="entry name" value="Cupredoxins"/>
    <property type="match status" value="3"/>
</dbReference>
<dbReference type="PROSITE" id="PS00079">
    <property type="entry name" value="MULTICOPPER_OXIDASE1"/>
    <property type="match status" value="1"/>
</dbReference>
<dbReference type="PROSITE" id="PS00080">
    <property type="entry name" value="MULTICOPPER_OXIDASE2"/>
    <property type="match status" value="1"/>
</dbReference>
<dbReference type="PROSITE" id="PS51318">
    <property type="entry name" value="TAT"/>
    <property type="match status" value="1"/>
</dbReference>
<gene>
    <name type="primary">copA</name>
    <name type="ordered locus">PSPTO_3914</name>
</gene>
<accession>P59571</accession>
<evidence type="ECO:0000250" key="1"/>
<evidence type="ECO:0000255" key="2"/>
<evidence type="ECO:0000255" key="3">
    <source>
        <dbReference type="PROSITE-ProRule" id="PRU00648"/>
    </source>
</evidence>
<evidence type="ECO:0000305" key="4"/>
<organism>
    <name type="scientific">Pseudomonas syringae pv. tomato (strain ATCC BAA-871 / DC3000)</name>
    <dbReference type="NCBI Taxonomy" id="223283"/>
    <lineage>
        <taxon>Bacteria</taxon>
        <taxon>Pseudomonadati</taxon>
        <taxon>Pseudomonadota</taxon>
        <taxon>Gammaproteobacteria</taxon>
        <taxon>Pseudomonadales</taxon>
        <taxon>Pseudomonadaceae</taxon>
        <taxon>Pseudomonas</taxon>
    </lineage>
</organism>
<comment type="function">
    <text evidence="1">Could be involved in copper resistance. May have oxidase activity (By similarity).</text>
</comment>
<comment type="subcellular location">
    <subcellularLocation>
        <location evidence="1">Periplasm</location>
    </subcellularLocation>
</comment>
<comment type="PTM">
    <text>Predicted to be exported by the Tat system. The position of the signal peptide cleavage has not been experimentally proven.</text>
</comment>
<comment type="similarity">
    <text evidence="4">Belongs to the multicopper oxidase family. CopA subfamily.</text>
</comment>
<name>COPA_PSESM</name>
<feature type="signal peptide" description="Tat-type signal" evidence="3">
    <location>
        <begin position="1"/>
        <end position="32"/>
    </location>
</feature>
<feature type="chain" id="PRO_0000002948" description="Copper resistance protein A homolog">
    <location>
        <begin position="33"/>
        <end position="589"/>
    </location>
</feature>
<feature type="repeat" description="1">
    <location>
        <begin position="367"/>
        <end position="374"/>
    </location>
</feature>
<feature type="repeat" description="2">
    <location>
        <begin position="396"/>
        <end position="403"/>
    </location>
</feature>
<feature type="region of interest" description="2 X 8 AA tandem repeats of D-H-X-X-M-X-G-M">
    <location>
        <begin position="367"/>
        <end position="403"/>
    </location>
</feature>
<feature type="binding site" description="type 2 copper site" evidence="1">
    <location>
        <position position="100"/>
    </location>
    <ligand>
        <name>Cu cation</name>
        <dbReference type="ChEBI" id="CHEBI:23378"/>
        <label>1</label>
    </ligand>
</feature>
<feature type="binding site" description="type 3 copper site" evidence="1">
    <location>
        <position position="102"/>
    </location>
    <ligand>
        <name>Cu cation</name>
        <dbReference type="ChEBI" id="CHEBI:23378"/>
        <label>2</label>
    </ligand>
</feature>
<feature type="binding site" description="type 3 copper site" evidence="1">
    <location>
        <position position="142"/>
    </location>
    <ligand>
        <name>Cu cation</name>
        <dbReference type="ChEBI" id="CHEBI:23378"/>
        <label>2</label>
    </ligand>
</feature>
<feature type="binding site" description="type 3 copper site" evidence="1">
    <location>
        <position position="144"/>
    </location>
    <ligand>
        <name>Cu cation</name>
        <dbReference type="ChEBI" id="CHEBI:23378"/>
        <label>3</label>
    </ligand>
</feature>
<feature type="binding site" description="type 1 copper site" evidence="2">
    <location>
        <position position="522"/>
    </location>
    <ligand>
        <name>Cu cation</name>
        <dbReference type="ChEBI" id="CHEBI:23378"/>
        <label>4</label>
    </ligand>
</feature>
<feature type="binding site" description="type 2 copper site" evidence="2">
    <location>
        <position position="525"/>
    </location>
    <ligand>
        <name>Cu cation</name>
        <dbReference type="ChEBI" id="CHEBI:23378"/>
        <label>1</label>
    </ligand>
</feature>
<feature type="binding site" description="type 3 copper site" evidence="2">
    <location>
        <position position="527"/>
    </location>
    <ligand>
        <name>Cu cation</name>
        <dbReference type="ChEBI" id="CHEBI:23378"/>
        <label>3</label>
    </ligand>
</feature>
<feature type="binding site" description="type 3 copper site" evidence="2">
    <location>
        <position position="570"/>
    </location>
    <ligand>
        <name>Cu cation</name>
        <dbReference type="ChEBI" id="CHEBI:23378"/>
        <label>3</label>
    </ligand>
</feature>
<feature type="binding site" description="type 1 copper site" evidence="2">
    <location>
        <position position="571"/>
    </location>
    <ligand>
        <name>Cu cation</name>
        <dbReference type="ChEBI" id="CHEBI:23378"/>
        <label>4</label>
    </ligand>
</feature>
<feature type="binding site" description="type 3 copper site" evidence="2">
    <location>
        <position position="572"/>
    </location>
    <ligand>
        <name>Cu cation</name>
        <dbReference type="ChEBI" id="CHEBI:23378"/>
        <label>2</label>
    </ligand>
</feature>
<feature type="binding site" description="type 1 copper site" evidence="2">
    <location>
        <position position="576"/>
    </location>
    <ligand>
        <name>Cu cation</name>
        <dbReference type="ChEBI" id="CHEBI:23378"/>
        <label>4</label>
    </ligand>
</feature>
<feature type="binding site" description="type 1 copper site" evidence="2">
    <location>
        <position position="581"/>
    </location>
    <ligand>
        <name>Cu cation</name>
        <dbReference type="ChEBI" id="CHEBI:23378"/>
        <label>4</label>
    </ligand>
</feature>